<evidence type="ECO:0000250" key="1"/>
<evidence type="ECO:0000255" key="2">
    <source>
        <dbReference type="PROSITE-ProRule" id="PRU00108"/>
    </source>
</evidence>
<evidence type="ECO:0000256" key="3">
    <source>
        <dbReference type="SAM" id="MobiDB-lite"/>
    </source>
</evidence>
<evidence type="ECO:0000269" key="4">
    <source>
    </source>
</evidence>
<evidence type="ECO:0000305" key="5"/>
<dbReference type="EMBL" id="AP005702">
    <property type="status" value="NOT_ANNOTATED_CDS"/>
    <property type="molecule type" value="Genomic_DNA"/>
</dbReference>
<dbReference type="EMBL" id="AP014965">
    <property type="status" value="NOT_ANNOTATED_CDS"/>
    <property type="molecule type" value="Genomic_DNA"/>
</dbReference>
<dbReference type="EMBL" id="CM000146">
    <property type="protein sequence ID" value="EAZ44560.1"/>
    <property type="status" value="ALT_SEQ"/>
    <property type="molecule type" value="Genomic_DNA"/>
</dbReference>
<dbReference type="SMR" id="A3BYC1"/>
<dbReference type="PaxDb" id="39947-A3BYC1"/>
<dbReference type="eggNOG" id="KOG0483">
    <property type="taxonomic scope" value="Eukaryota"/>
</dbReference>
<dbReference type="InParanoid" id="A3BYC1"/>
<dbReference type="Proteomes" id="UP000000763">
    <property type="component" value="Chromosome 9"/>
</dbReference>
<dbReference type="Proteomes" id="UP000007752">
    <property type="component" value="Chromosome 9"/>
</dbReference>
<dbReference type="Proteomes" id="UP000059680">
    <property type="component" value="Chromosome 9"/>
</dbReference>
<dbReference type="GO" id="GO:0005634">
    <property type="term" value="C:nucleus"/>
    <property type="evidence" value="ECO:0000318"/>
    <property type="project" value="GO_Central"/>
</dbReference>
<dbReference type="GO" id="GO:0000981">
    <property type="term" value="F:DNA-binding transcription factor activity, RNA polymerase II-specific"/>
    <property type="evidence" value="ECO:0007669"/>
    <property type="project" value="InterPro"/>
</dbReference>
<dbReference type="GO" id="GO:0043565">
    <property type="term" value="F:sequence-specific DNA binding"/>
    <property type="evidence" value="ECO:0000318"/>
    <property type="project" value="GO_Central"/>
</dbReference>
<dbReference type="GO" id="GO:0045893">
    <property type="term" value="P:positive regulation of DNA-templated transcription"/>
    <property type="evidence" value="ECO:0000318"/>
    <property type="project" value="GO_Central"/>
</dbReference>
<dbReference type="CDD" id="cd00086">
    <property type="entry name" value="homeodomain"/>
    <property type="match status" value="1"/>
</dbReference>
<dbReference type="FunFam" id="1.10.10.60:FF:000410">
    <property type="entry name" value="Homeobox-leucine zipper protein HOX25-like"/>
    <property type="match status" value="1"/>
</dbReference>
<dbReference type="Gene3D" id="1.10.10.60">
    <property type="entry name" value="Homeodomain-like"/>
    <property type="match status" value="1"/>
</dbReference>
<dbReference type="InterPro" id="IPR001356">
    <property type="entry name" value="HD"/>
</dbReference>
<dbReference type="InterPro" id="IPR045224">
    <property type="entry name" value="HDZip_class_I_plant"/>
</dbReference>
<dbReference type="InterPro" id="IPR017970">
    <property type="entry name" value="Homeobox_CS"/>
</dbReference>
<dbReference type="InterPro" id="IPR009057">
    <property type="entry name" value="Homeodomain-like_sf"/>
</dbReference>
<dbReference type="InterPro" id="IPR000047">
    <property type="entry name" value="HTH_motif"/>
</dbReference>
<dbReference type="InterPro" id="IPR003106">
    <property type="entry name" value="Leu_zip_homeo"/>
</dbReference>
<dbReference type="PANTHER" id="PTHR24326">
    <property type="entry name" value="HOMEOBOX-LEUCINE ZIPPER PROTEIN"/>
    <property type="match status" value="1"/>
</dbReference>
<dbReference type="PANTHER" id="PTHR24326:SF525">
    <property type="entry name" value="HOMEOBOX-LEUCINE ZIPPER PROTEIN HOX25"/>
    <property type="match status" value="1"/>
</dbReference>
<dbReference type="Pfam" id="PF02183">
    <property type="entry name" value="HALZ"/>
    <property type="match status" value="1"/>
</dbReference>
<dbReference type="Pfam" id="PF00046">
    <property type="entry name" value="Homeodomain"/>
    <property type="match status" value="1"/>
</dbReference>
<dbReference type="PRINTS" id="PR00031">
    <property type="entry name" value="HTHREPRESSR"/>
</dbReference>
<dbReference type="SMART" id="SM00389">
    <property type="entry name" value="HOX"/>
    <property type="match status" value="1"/>
</dbReference>
<dbReference type="SUPFAM" id="SSF46689">
    <property type="entry name" value="Homeodomain-like"/>
    <property type="match status" value="1"/>
</dbReference>
<dbReference type="PROSITE" id="PS00027">
    <property type="entry name" value="HOMEOBOX_1"/>
    <property type="match status" value="1"/>
</dbReference>
<dbReference type="PROSITE" id="PS50071">
    <property type="entry name" value="HOMEOBOX_2"/>
    <property type="match status" value="1"/>
</dbReference>
<accession>A3BYC1</accession>
<keyword id="KW-0238">DNA-binding</keyword>
<keyword id="KW-0371">Homeobox</keyword>
<keyword id="KW-0539">Nucleus</keyword>
<keyword id="KW-1185">Reference proteome</keyword>
<keyword id="KW-0804">Transcription</keyword>
<keyword id="KW-0805">Transcription regulation</keyword>
<name>HOX25_ORYSJ</name>
<proteinExistence type="evidence at transcript level"/>
<feature type="chain" id="PRO_0000331723" description="Homeobox-leucine zipper protein HOX25">
    <location>
        <begin position="1"/>
        <end position="320"/>
    </location>
</feature>
<feature type="DNA-binding region" description="Homeobox" evidence="2">
    <location>
        <begin position="79"/>
        <end position="139"/>
    </location>
</feature>
<feature type="region of interest" description="Leucine-zipper">
    <location>
        <begin position="138"/>
        <end position="182"/>
    </location>
</feature>
<feature type="region of interest" description="Disordered" evidence="3">
    <location>
        <begin position="181"/>
        <end position="209"/>
    </location>
</feature>
<feature type="region of interest" description="Disordered" evidence="3">
    <location>
        <begin position="249"/>
        <end position="282"/>
    </location>
</feature>
<feature type="compositionally biased region" description="Acidic residues" evidence="3">
    <location>
        <begin position="265"/>
        <end position="278"/>
    </location>
</feature>
<organism>
    <name type="scientific">Oryza sativa subsp. japonica</name>
    <name type="common">Rice</name>
    <dbReference type="NCBI Taxonomy" id="39947"/>
    <lineage>
        <taxon>Eukaryota</taxon>
        <taxon>Viridiplantae</taxon>
        <taxon>Streptophyta</taxon>
        <taxon>Embryophyta</taxon>
        <taxon>Tracheophyta</taxon>
        <taxon>Spermatophyta</taxon>
        <taxon>Magnoliopsida</taxon>
        <taxon>Liliopsida</taxon>
        <taxon>Poales</taxon>
        <taxon>Poaceae</taxon>
        <taxon>BOP clade</taxon>
        <taxon>Oryzoideae</taxon>
        <taxon>Oryzeae</taxon>
        <taxon>Oryzinae</taxon>
        <taxon>Oryza</taxon>
        <taxon>Oryza sativa</taxon>
    </lineage>
</organism>
<sequence length="320" mass="35131">MAASSEVSIDPDQWFYIYSLERVAYVCERVGSPVMEEAELRRRRRKRPFLTTTHDELELQMEDLVDELYGVDEQGSSSAAARKRRLTAEQVRALERSFEEEKRKLEPERKSELARRLGIAPRQVAVWFQNRRARWKTKQLELDFDRLRAAHDELLAGRTALAADNESLRSQVILLTEKLQANGKSPSPSPAPAEQTAVPAAPESAKSFQLEEGRRLYDAAGSTTTTNGGGGGVAMPAARVAAARAASNDSPESYFAGARSPPSSSEDDCGGAGSDDDYPSSSVLLPVDATLVGDAFEHAVAATVAADEEAPLNSWEWFWN</sequence>
<gene>
    <name type="primary">HOX25</name>
    <name type="ordered locus">Os09g0379600</name>
    <name type="ordered locus">LOC_Os09g21180</name>
    <name type="ORF">OsJ_028043</name>
    <name type="ORF">P0027G10.17</name>
</gene>
<comment type="function">
    <text evidence="1">Probable transcription factor.</text>
</comment>
<comment type="subcellular location">
    <subcellularLocation>
        <location evidence="5">Nucleus</location>
    </subcellularLocation>
</comment>
<comment type="tissue specificity">
    <text evidence="4">Expressed in roots, leaf sheaths and blades and panicles.</text>
</comment>
<comment type="similarity">
    <text evidence="5">Belongs to the HD-ZIP homeobox family. Class I subfamily.</text>
</comment>
<comment type="sequence caution" evidence="5">
    <conflict type="erroneous gene model prediction">
        <sequence resource="EMBL-CDS" id="EAZ44560"/>
    </conflict>
</comment>
<protein>
    <recommendedName>
        <fullName>Homeobox-leucine zipper protein HOX25</fullName>
    </recommendedName>
    <alternativeName>
        <fullName>HD-ZIP protein HOX25</fullName>
    </alternativeName>
    <alternativeName>
        <fullName>Homeodomain transcription factor HOX25</fullName>
    </alternativeName>
    <alternativeName>
        <fullName>OsHox25</fullName>
    </alternativeName>
</protein>
<reference key="1">
    <citation type="journal article" date="2005" name="Nature">
        <title>The map-based sequence of the rice genome.</title>
        <authorList>
            <consortium name="International rice genome sequencing project (IRGSP)"/>
        </authorList>
    </citation>
    <scope>NUCLEOTIDE SEQUENCE [LARGE SCALE GENOMIC DNA]</scope>
    <source>
        <strain>cv. Nipponbare</strain>
    </source>
</reference>
<reference key="2">
    <citation type="journal article" date="2013" name="Rice">
        <title>Improvement of the Oryza sativa Nipponbare reference genome using next generation sequence and optical map data.</title>
        <authorList>
            <person name="Kawahara Y."/>
            <person name="de la Bastide M."/>
            <person name="Hamilton J.P."/>
            <person name="Kanamori H."/>
            <person name="McCombie W.R."/>
            <person name="Ouyang S."/>
            <person name="Schwartz D.C."/>
            <person name="Tanaka T."/>
            <person name="Wu J."/>
            <person name="Zhou S."/>
            <person name="Childs K.L."/>
            <person name="Davidson R.M."/>
            <person name="Lin H."/>
            <person name="Quesada-Ocampo L."/>
            <person name="Vaillancourt B."/>
            <person name="Sakai H."/>
            <person name="Lee S.S."/>
            <person name="Kim J."/>
            <person name="Numa H."/>
            <person name="Itoh T."/>
            <person name="Buell C.R."/>
            <person name="Matsumoto T."/>
        </authorList>
    </citation>
    <scope>GENOME REANNOTATION</scope>
    <source>
        <strain>cv. Nipponbare</strain>
    </source>
</reference>
<reference key="3">
    <citation type="journal article" date="2005" name="PLoS Biol.">
        <title>The genomes of Oryza sativa: a history of duplications.</title>
        <authorList>
            <person name="Yu J."/>
            <person name="Wang J."/>
            <person name="Lin W."/>
            <person name="Li S."/>
            <person name="Li H."/>
            <person name="Zhou J."/>
            <person name="Ni P."/>
            <person name="Dong W."/>
            <person name="Hu S."/>
            <person name="Zeng C."/>
            <person name="Zhang J."/>
            <person name="Zhang Y."/>
            <person name="Li R."/>
            <person name="Xu Z."/>
            <person name="Li S."/>
            <person name="Li X."/>
            <person name="Zheng H."/>
            <person name="Cong L."/>
            <person name="Lin L."/>
            <person name="Yin J."/>
            <person name="Geng J."/>
            <person name="Li G."/>
            <person name="Shi J."/>
            <person name="Liu J."/>
            <person name="Lv H."/>
            <person name="Li J."/>
            <person name="Wang J."/>
            <person name="Deng Y."/>
            <person name="Ran L."/>
            <person name="Shi X."/>
            <person name="Wang X."/>
            <person name="Wu Q."/>
            <person name="Li C."/>
            <person name="Ren X."/>
            <person name="Wang J."/>
            <person name="Wang X."/>
            <person name="Li D."/>
            <person name="Liu D."/>
            <person name="Zhang X."/>
            <person name="Ji Z."/>
            <person name="Zhao W."/>
            <person name="Sun Y."/>
            <person name="Zhang Z."/>
            <person name="Bao J."/>
            <person name="Han Y."/>
            <person name="Dong L."/>
            <person name="Ji J."/>
            <person name="Chen P."/>
            <person name="Wu S."/>
            <person name="Liu J."/>
            <person name="Xiao Y."/>
            <person name="Bu D."/>
            <person name="Tan J."/>
            <person name="Yang L."/>
            <person name="Ye C."/>
            <person name="Zhang J."/>
            <person name="Xu J."/>
            <person name="Zhou Y."/>
            <person name="Yu Y."/>
            <person name="Zhang B."/>
            <person name="Zhuang S."/>
            <person name="Wei H."/>
            <person name="Liu B."/>
            <person name="Lei M."/>
            <person name="Yu H."/>
            <person name="Li Y."/>
            <person name="Xu H."/>
            <person name="Wei S."/>
            <person name="He X."/>
            <person name="Fang L."/>
            <person name="Zhang Z."/>
            <person name="Zhang Y."/>
            <person name="Huang X."/>
            <person name="Su Z."/>
            <person name="Tong W."/>
            <person name="Li J."/>
            <person name="Tong Z."/>
            <person name="Li S."/>
            <person name="Ye J."/>
            <person name="Wang L."/>
            <person name="Fang L."/>
            <person name="Lei T."/>
            <person name="Chen C.-S."/>
            <person name="Chen H.-C."/>
            <person name="Xu Z."/>
            <person name="Li H."/>
            <person name="Huang H."/>
            <person name="Zhang F."/>
            <person name="Xu H."/>
            <person name="Li N."/>
            <person name="Zhao C."/>
            <person name="Li S."/>
            <person name="Dong L."/>
            <person name="Huang Y."/>
            <person name="Li L."/>
            <person name="Xi Y."/>
            <person name="Qi Q."/>
            <person name="Li W."/>
            <person name="Zhang B."/>
            <person name="Hu W."/>
            <person name="Zhang Y."/>
            <person name="Tian X."/>
            <person name="Jiao Y."/>
            <person name="Liang X."/>
            <person name="Jin J."/>
            <person name="Gao L."/>
            <person name="Zheng W."/>
            <person name="Hao B."/>
            <person name="Liu S.-M."/>
            <person name="Wang W."/>
            <person name="Yuan L."/>
            <person name="Cao M."/>
            <person name="McDermott J."/>
            <person name="Samudrala R."/>
            <person name="Wang J."/>
            <person name="Wong G.K.-S."/>
            <person name="Yang H."/>
        </authorList>
    </citation>
    <scope>NUCLEOTIDE SEQUENCE [LARGE SCALE GENOMIC DNA]</scope>
    <source>
        <strain>cv. Nipponbare</strain>
    </source>
</reference>
<reference key="4">
    <citation type="journal article" date="2008" name="Plant Mol. Biol.">
        <title>A genome-wide survey of HD-Zip genes in rice and analysis of drought-responsive family members.</title>
        <authorList>
            <person name="Agalou A."/>
            <person name="Purwantomo S."/>
            <person name="Oevernaes E."/>
            <person name="Johannesson H."/>
            <person name="Zhu X."/>
            <person name="Estiati A."/>
            <person name="de Kam R.J."/>
            <person name="Engstroem P."/>
            <person name="Slamet-Loedin I.H."/>
            <person name="Zhu Z."/>
            <person name="Wang M."/>
            <person name="Xiong L."/>
            <person name="Meijer A.H."/>
            <person name="Ouwerkerk P.B.F."/>
        </authorList>
    </citation>
    <scope>TISSUE SPECIFICITY</scope>
    <scope>GENE FAMILY</scope>
    <scope>NOMENCLATURE</scope>
</reference>